<accession>Q6W3B0</accession>
<dbReference type="EMBL" id="AY314982">
    <property type="protein sequence ID" value="AAQ88398.1"/>
    <property type="molecule type" value="mRNA"/>
</dbReference>
<dbReference type="RefSeq" id="NP_955784.1">
    <property type="nucleotide sequence ID" value="NM_199490.3"/>
</dbReference>
<dbReference type="SMR" id="Q6W3B0"/>
<dbReference type="FunCoup" id="Q6W3B0">
    <property type="interactions" value="17"/>
</dbReference>
<dbReference type="STRING" id="10116.ENSRNOP00000031941"/>
<dbReference type="GlyCosmos" id="Q6W3B0">
    <property type="glycosylation" value="2 sites, No reported glycans"/>
</dbReference>
<dbReference type="GlyGen" id="Q6W3B0">
    <property type="glycosylation" value="2 sites"/>
</dbReference>
<dbReference type="PhosphoSitePlus" id="Q6W3B0"/>
<dbReference type="PaxDb" id="10116-ENSRNOP00000031941"/>
<dbReference type="GeneID" id="291754"/>
<dbReference type="KEGG" id="rno:291754"/>
<dbReference type="AGR" id="RGD:735015"/>
<dbReference type="CTD" id="147409"/>
<dbReference type="RGD" id="735015">
    <property type="gene designation" value="Dsg4"/>
</dbReference>
<dbReference type="eggNOG" id="KOG3594">
    <property type="taxonomic scope" value="Eukaryota"/>
</dbReference>
<dbReference type="HOGENOM" id="CLU_005284_0_0_1"/>
<dbReference type="InParanoid" id="Q6W3B0"/>
<dbReference type="OrthoDB" id="8961010at2759"/>
<dbReference type="Reactome" id="R-RNO-6805567">
    <property type="pathway name" value="Keratinization"/>
</dbReference>
<dbReference type="Reactome" id="R-RNO-6809371">
    <property type="pathway name" value="Formation of the cornified envelope"/>
</dbReference>
<dbReference type="PRO" id="PR:Q6W3B0"/>
<dbReference type="Proteomes" id="UP000002494">
    <property type="component" value="Chromosome 18"/>
</dbReference>
<dbReference type="GO" id="GO:0030057">
    <property type="term" value="C:desmosome"/>
    <property type="evidence" value="ECO:0000266"/>
    <property type="project" value="RGD"/>
</dbReference>
<dbReference type="GO" id="GO:0005886">
    <property type="term" value="C:plasma membrane"/>
    <property type="evidence" value="ECO:0007669"/>
    <property type="project" value="UniProtKB-SubCell"/>
</dbReference>
<dbReference type="GO" id="GO:0005509">
    <property type="term" value="F:calcium ion binding"/>
    <property type="evidence" value="ECO:0000315"/>
    <property type="project" value="RGD"/>
</dbReference>
<dbReference type="GO" id="GO:0030509">
    <property type="term" value="P:BMP signaling pathway"/>
    <property type="evidence" value="ECO:0000266"/>
    <property type="project" value="RGD"/>
</dbReference>
<dbReference type="GO" id="GO:0007155">
    <property type="term" value="P:cell adhesion"/>
    <property type="evidence" value="ECO:0000304"/>
    <property type="project" value="RGD"/>
</dbReference>
<dbReference type="GO" id="GO:0098609">
    <property type="term" value="P:cell-cell adhesion"/>
    <property type="evidence" value="ECO:0000266"/>
    <property type="project" value="RGD"/>
</dbReference>
<dbReference type="GO" id="GO:0001942">
    <property type="term" value="P:hair follicle development"/>
    <property type="evidence" value="ECO:0000266"/>
    <property type="project" value="RGD"/>
</dbReference>
<dbReference type="GO" id="GO:0007156">
    <property type="term" value="P:homophilic cell adhesion via plasma membrane adhesion molecules"/>
    <property type="evidence" value="ECO:0007669"/>
    <property type="project" value="InterPro"/>
</dbReference>
<dbReference type="GO" id="GO:0030216">
    <property type="term" value="P:keratinocyte differentiation"/>
    <property type="evidence" value="ECO:0000266"/>
    <property type="project" value="RGD"/>
</dbReference>
<dbReference type="CDD" id="cd11304">
    <property type="entry name" value="Cadherin_repeat"/>
    <property type="match status" value="4"/>
</dbReference>
<dbReference type="FunFam" id="2.60.40.60:FF:000011">
    <property type="entry name" value="Cadherin 1"/>
    <property type="match status" value="1"/>
</dbReference>
<dbReference type="FunFam" id="2.60.40.60:FF:000031">
    <property type="entry name" value="Cadherin 3"/>
    <property type="match status" value="1"/>
</dbReference>
<dbReference type="FunFam" id="2.60.40.60:FF:000068">
    <property type="entry name" value="Desmoglein 1"/>
    <property type="match status" value="1"/>
</dbReference>
<dbReference type="FunFam" id="2.60.40.60:FF:000083">
    <property type="entry name" value="Desmoglein 1"/>
    <property type="match status" value="1"/>
</dbReference>
<dbReference type="FunFam" id="4.10.900.10:FF:000003">
    <property type="entry name" value="Desmoglein 1"/>
    <property type="match status" value="1"/>
</dbReference>
<dbReference type="FunFam" id="2.60.40.60:FF:000074">
    <property type="entry name" value="Desmoglein 4"/>
    <property type="match status" value="1"/>
</dbReference>
<dbReference type="Gene3D" id="2.60.40.60">
    <property type="entry name" value="Cadherins"/>
    <property type="match status" value="5"/>
</dbReference>
<dbReference type="Gene3D" id="4.10.900.10">
    <property type="entry name" value="TCF3-CBD (Catenin binding domain)"/>
    <property type="match status" value="1"/>
</dbReference>
<dbReference type="InterPro" id="IPR050971">
    <property type="entry name" value="Cadherin-domain_protein"/>
</dbReference>
<dbReference type="InterPro" id="IPR002126">
    <property type="entry name" value="Cadherin-like_dom"/>
</dbReference>
<dbReference type="InterPro" id="IPR015919">
    <property type="entry name" value="Cadherin-like_sf"/>
</dbReference>
<dbReference type="InterPro" id="IPR020894">
    <property type="entry name" value="Cadherin_CS"/>
</dbReference>
<dbReference type="InterPro" id="IPR000233">
    <property type="entry name" value="Cadherin_Y-type_LIR"/>
</dbReference>
<dbReference type="InterPro" id="IPR027397">
    <property type="entry name" value="Catenin-bd_sf"/>
</dbReference>
<dbReference type="InterPro" id="IPR009122">
    <property type="entry name" value="Desmosomal_cadherin"/>
</dbReference>
<dbReference type="PANTHER" id="PTHR24025">
    <property type="entry name" value="DESMOGLEIN FAMILY MEMBER"/>
    <property type="match status" value="1"/>
</dbReference>
<dbReference type="PANTHER" id="PTHR24025:SF10">
    <property type="entry name" value="DESMOGLEIN-4"/>
    <property type="match status" value="1"/>
</dbReference>
<dbReference type="Pfam" id="PF01049">
    <property type="entry name" value="CADH_Y-type_LIR"/>
    <property type="match status" value="1"/>
</dbReference>
<dbReference type="Pfam" id="PF00028">
    <property type="entry name" value="Cadherin"/>
    <property type="match status" value="3"/>
</dbReference>
<dbReference type="PRINTS" id="PR00205">
    <property type="entry name" value="CADHERIN"/>
</dbReference>
<dbReference type="PRINTS" id="PR01818">
    <property type="entry name" value="DESMOCADHERN"/>
</dbReference>
<dbReference type="PRINTS" id="PR01819">
    <property type="entry name" value="DESMOGLEIN"/>
</dbReference>
<dbReference type="SMART" id="SM00112">
    <property type="entry name" value="CA"/>
    <property type="match status" value="4"/>
</dbReference>
<dbReference type="SUPFAM" id="SSF49313">
    <property type="entry name" value="Cadherin-like"/>
    <property type="match status" value="4"/>
</dbReference>
<dbReference type="PROSITE" id="PS00232">
    <property type="entry name" value="CADHERIN_1"/>
    <property type="match status" value="2"/>
</dbReference>
<dbReference type="PROSITE" id="PS50268">
    <property type="entry name" value="CADHERIN_2"/>
    <property type="match status" value="4"/>
</dbReference>
<sequence length="1040" mass="114367">MDWLLFRNICLLILFMVVLGVNSEFIVEVKELDIENGTTTWQTVRRQKREWIKFAAACREGEDNSKRNPIARIRSDCEVSQRITYRISGAGIDRPPYGVFTINPRTGEINITSVVDREITPLFLIHCRALNSRGEDLERPLELRVKVMDVNDNPPVFTQNVYTANIEENSDANALVVKLSATDADEDNHLNSKIAYKIISQEPAGAPMFMVNRYTGEVRTMSNFLDREQHSMYNLLVRGSDRDGATDGLSSECDCRIKILDVNDNFPILEKTSYSASIEENCLSSELIRLQAIDLDEEGTDNWLAQYSILSGNDGNWFEIQTDPKTNEGILKLVKMLDYEQEPNIYLSIGVRNQAEFHHSVASQFQMHSTPVRIQVINVREGPTFRPSSMTFSLRGGMRGDSLMNYVLGTYTAIDMDTGSPATNVRYVIGHDAGSWLKVDSRTGEIQFSREFDTKSKYITDGMYAAEILAIDDGSGRTATGTICIEVPDANDYCPVIYAESRSVCTHASSVRIYVNDHSFGAPFTFCVVDESPDTADIWDIRSINGTSAILMTEQTLSPGPYQIPILVKDSHNRACELPQTVLLDACLCDDYHVCLHSSTTGIYTGDTIWVTDDMGTVTDDGLRQSNVGLGPAGIGMIILGLLLLFLSPLLLLMCCCKRRQPEGLGTRFAPVPEGGEGVMQPWRIEGAHPEDRDVSNICVPMTASNTQDRIDSSEIYTNTYAGGGTVEGGVSGVELNTGVGTAAGIAAGGATGTLRKRSSTIGTLREYQDTGMNMAFLDSYFSEKAYAYADEDEGRPANDCLLIYDHEGTGSPVGSIGCCSWIVDDLDESYMETLDPKFRTLAEICLDTEIEPFPSHQACIPISTDLPLLGPNYFVNESSGMTLSEAEFQAEMAAASEPMIHGDIIVTETYTATDPCVQPTTIVFDSQLPPNVVVTETVMAPVYDVQGNICVPAEIANTHNVYYAERVVASPGVPDMGNGNIGDTCIGPVMSGGILVGPEIQVTQMMSPDIHISQTTRSTSPMTSQHRVTRYSNIHYSRQ</sequence>
<keyword id="KW-0106">Calcium</keyword>
<keyword id="KW-0130">Cell adhesion</keyword>
<keyword id="KW-0965">Cell junction</keyword>
<keyword id="KW-1003">Cell membrane</keyword>
<keyword id="KW-0165">Cleavage on pair of basic residues</keyword>
<keyword id="KW-0225">Disease variant</keyword>
<keyword id="KW-0325">Glycoprotein</keyword>
<keyword id="KW-0472">Membrane</keyword>
<keyword id="KW-0479">Metal-binding</keyword>
<keyword id="KW-1185">Reference proteome</keyword>
<keyword id="KW-0677">Repeat</keyword>
<keyword id="KW-0732">Signal</keyword>
<keyword id="KW-0812">Transmembrane</keyword>
<keyword id="KW-1133">Transmembrane helix</keyword>
<gene>
    <name type="primary">Dsg4</name>
</gene>
<comment type="function">
    <text evidence="1 8">A component of desmosome cell-cell junctions which are required for positive regulation of cellular adhesion (By similarity). Coordinates the transition from proliferation to differentiation in hair follicle keratinocytes (By similarity). Plays a role in moderating lymphocyte migration to inflamed skin and maintaining homeostasis of the epidermal inflammatory response (PubMed:33995349).</text>
</comment>
<comment type="subunit">
    <text evidence="2">Interacts with JUP.</text>
</comment>
<comment type="subcellular location">
    <subcellularLocation>
        <location evidence="2">Cell membrane</location>
        <topology evidence="4">Single-pass type I membrane protein</topology>
    </subcellularLocation>
    <subcellularLocation>
        <location evidence="2">Cell junction</location>
        <location evidence="2">Desmosome</location>
    </subcellularLocation>
    <text evidence="2">Colocalizes with JUP at desmosomes.</text>
</comment>
<comment type="domain">
    <text evidence="3">Three calcium ions are usually bound at the interface of each cadherin domain and rigidify the connections, imparting a strong curvature to the full-length ectodomain.</text>
</comment>
<comment type="disease">
    <text evidence="7">Defects in Dsg4 are the cause of an autosomal recessive phenotype lanceolate hair (lah) (PubMed:15081105). Lah rat pups develop only a few short hairs on the head and neck which form a lance head at the tip and disappear within one month (PubMed:15081105). Hair regrows again a few days later, following a 29-day cycle of external growth and loss (PubMed:15081105). Almost complete pelage hair loss occurs by 18 month (PubMed:15081105).</text>
</comment>
<comment type="disruption phenotype">
    <text evidence="8">Knockout rats show an increase in skin leukocyte population with higher CD3(+) T-cell counts (PubMed:33995349). Knockout rats treated with topical imiquimod develop significant skin erythema, thicker skin, erosions, mild scabs, scaling, dermal neovascularization, vascular branching and vessel enlargement (PubMed:33995349). Severe hyperkeratosis, parakeratosis, intense hydropic degeneration of basal cells, marked vascular proliferation and thickening of the epidermis (PubMed:33995349). Increased exocytosis of lymphocytes and neutrophils into the epidermis and slight mononuclear infiltrate in the dermis (PubMed:33995349). Increase in pro-inflammatory cytokines IL1B and Cxcl8/Il-8 as well as an increase in Il-10 (PubMed:33995349). Increase in the expression of chemokine receptors Ccr2, Ccr3 and Cxcr5. Enhanced leukocyte and CD3(+) T-cell dermal infiltration (PubMed:33995349).</text>
</comment>
<reference key="1">
    <citation type="journal article" date="2004" name="Genomics">
        <title>The lanceolate hair rat phenotype results from a missense mutation in a calcium coordinating site of the desmoglein 4 gene.</title>
        <authorList>
            <person name="Jahoda C.A."/>
            <person name="Kljuic A."/>
            <person name="O'Shaughnessy R."/>
            <person name="Crossley N."/>
            <person name="Whitehouse C.J."/>
            <person name="Robinson M."/>
            <person name="Reynolds A.J."/>
            <person name="Demarchez M."/>
            <person name="Porter R.M."/>
            <person name="Shapiro L."/>
            <person name="Christiano A.M."/>
        </authorList>
    </citation>
    <scope>NUCLEOTIDE SEQUENCE [MRNA]</scope>
    <scope>VARIANT LAH VAL-228</scope>
    <source>
        <strain>BDIX</strain>
    </source>
</reference>
<reference key="2">
    <citation type="journal article" date="2021" name="Front. Immunol.">
        <title>Desmoglein-4 Deficiency Exacerbates Psoriasiform Dermatitis in Rats While Psoriasis Patients Displayed a Decreased Gene Expression of DSG4.</title>
        <authorList>
            <person name="Moreno-Sosa T."/>
            <person name="Sanchez M.B."/>
            <person name="Pietrobon E.O."/>
            <person name="Fernandez-Munoz J.M."/>
            <person name="Zoppino F.C.M."/>
            <person name="Neira F.J."/>
            <person name="Germano M.J."/>
            <person name="Cargnelutti D.E."/>
            <person name="Innocenti A.C."/>
            <person name="Jahn G.A."/>
            <person name="Valdez S.R."/>
            <person name="Mackern-Oberti J.P."/>
        </authorList>
    </citation>
    <scope>FUNCTION</scope>
    <scope>DISRUPTION PHENOTYPE</scope>
</reference>
<name>DSG4_RAT</name>
<organism>
    <name type="scientific">Rattus norvegicus</name>
    <name type="common">Rat</name>
    <dbReference type="NCBI Taxonomy" id="10116"/>
    <lineage>
        <taxon>Eukaryota</taxon>
        <taxon>Metazoa</taxon>
        <taxon>Chordata</taxon>
        <taxon>Craniata</taxon>
        <taxon>Vertebrata</taxon>
        <taxon>Euteleostomi</taxon>
        <taxon>Mammalia</taxon>
        <taxon>Eutheria</taxon>
        <taxon>Euarchontoglires</taxon>
        <taxon>Glires</taxon>
        <taxon>Rodentia</taxon>
        <taxon>Myomorpha</taxon>
        <taxon>Muroidea</taxon>
        <taxon>Muridae</taxon>
        <taxon>Murinae</taxon>
        <taxon>Rattus</taxon>
    </lineage>
</organism>
<feature type="signal peptide" evidence="4">
    <location>
        <begin position="1"/>
        <end position="23"/>
    </location>
</feature>
<feature type="propeptide" id="PRO_0000003859" evidence="4">
    <location>
        <begin position="24"/>
        <end position="49"/>
    </location>
</feature>
<feature type="chain" id="PRO_0000003860" description="Desmoglein-4">
    <location>
        <begin position="50"/>
        <end position="1040"/>
    </location>
</feature>
<feature type="topological domain" description="Extracellular" evidence="4">
    <location>
        <begin position="50"/>
        <end position="633"/>
    </location>
</feature>
<feature type="transmembrane region" description="Helical" evidence="4">
    <location>
        <begin position="634"/>
        <end position="654"/>
    </location>
</feature>
<feature type="topological domain" description="Cytoplasmic" evidence="4">
    <location>
        <begin position="655"/>
        <end position="1040"/>
    </location>
</feature>
<feature type="domain" description="Cadherin 1" evidence="5">
    <location>
        <begin position="50"/>
        <end position="157"/>
    </location>
</feature>
<feature type="domain" description="Cadherin 2" evidence="5">
    <location>
        <begin position="158"/>
        <end position="269"/>
    </location>
</feature>
<feature type="domain" description="Cadherin 3" evidence="5">
    <location>
        <begin position="270"/>
        <end position="385"/>
    </location>
</feature>
<feature type="domain" description="Cadherin 4" evidence="5">
    <location>
        <begin position="389"/>
        <end position="497"/>
    </location>
</feature>
<feature type="repeat" description="Desmoglein repeat 1">
    <location>
        <begin position="883"/>
        <end position="909"/>
    </location>
</feature>
<feature type="repeat" description="Desmoglein repeat 2">
    <location>
        <begin position="910"/>
        <end position="940"/>
    </location>
</feature>
<feature type="region of interest" description="Disordered" evidence="6">
    <location>
        <begin position="1015"/>
        <end position="1040"/>
    </location>
</feature>
<feature type="glycosylation site" description="N-linked (GlcNAc...) asparagine" evidence="4">
    <location>
        <position position="110"/>
    </location>
</feature>
<feature type="glycosylation site" description="N-linked (GlcNAc...) asparagine" evidence="4">
    <location>
        <position position="545"/>
    </location>
</feature>
<feature type="sequence variant" description="In lah." evidence="7">
    <original>E</original>
    <variation>V</variation>
    <location>
        <position position="228"/>
    </location>
</feature>
<proteinExistence type="evidence at protein level"/>
<protein>
    <recommendedName>
        <fullName>Desmoglein-4</fullName>
    </recommendedName>
</protein>
<evidence type="ECO:0000250" key="1">
    <source>
        <dbReference type="UniProtKB" id="Q7TMD7"/>
    </source>
</evidence>
<evidence type="ECO:0000250" key="2">
    <source>
        <dbReference type="UniProtKB" id="Q86SJ6"/>
    </source>
</evidence>
<evidence type="ECO:0000250" key="3">
    <source>
        <dbReference type="UniProtKB" id="Q8AYD0"/>
    </source>
</evidence>
<evidence type="ECO:0000255" key="4"/>
<evidence type="ECO:0000255" key="5">
    <source>
        <dbReference type="PROSITE-ProRule" id="PRU00043"/>
    </source>
</evidence>
<evidence type="ECO:0000256" key="6">
    <source>
        <dbReference type="SAM" id="MobiDB-lite"/>
    </source>
</evidence>
<evidence type="ECO:0000269" key="7">
    <source>
    </source>
</evidence>
<evidence type="ECO:0000269" key="8">
    <source>
    </source>
</evidence>